<sequence>MNVVTHIHELKELIKQHQEKQHSIGFVPTMGFLHEGHLTLAKEARDQNDLVVMSIFVNPLQFGPNEDFESYPRDMERDQRLAKEAGVDILFTPDVKEMYANEPSITMTVRKRTDVLCGKKRPGHFDGVVTVLTKLFHLVAPTNAYFGLKDAQQVAVIDAMIKDFFFDLHLVSVPTVREEDGLAKSSRNVYLSDKERQEAPALYRALKKGQSAIENGERDVSRIYQLVEEDILQTSGEIDYIEIYSYPELEPLQQLAGQVIIAIAVKFSRARLIDNVIFHVPESGEKHV</sequence>
<organism>
    <name type="scientific">Bacillus pumilus (strain SAFR-032)</name>
    <dbReference type="NCBI Taxonomy" id="315750"/>
    <lineage>
        <taxon>Bacteria</taxon>
        <taxon>Bacillati</taxon>
        <taxon>Bacillota</taxon>
        <taxon>Bacilli</taxon>
        <taxon>Bacillales</taxon>
        <taxon>Bacillaceae</taxon>
        <taxon>Bacillus</taxon>
    </lineage>
</organism>
<feature type="chain" id="PRO_1000076840" description="Pantothenate synthetase">
    <location>
        <begin position="1"/>
        <end position="288"/>
    </location>
</feature>
<feature type="active site" description="Proton donor" evidence="1">
    <location>
        <position position="37"/>
    </location>
</feature>
<feature type="binding site" evidence="1">
    <location>
        <begin position="30"/>
        <end position="37"/>
    </location>
    <ligand>
        <name>ATP</name>
        <dbReference type="ChEBI" id="CHEBI:30616"/>
    </ligand>
</feature>
<feature type="binding site" evidence="1">
    <location>
        <position position="61"/>
    </location>
    <ligand>
        <name>(R)-pantoate</name>
        <dbReference type="ChEBI" id="CHEBI:15980"/>
    </ligand>
</feature>
<feature type="binding site" evidence="1">
    <location>
        <position position="61"/>
    </location>
    <ligand>
        <name>beta-alanine</name>
        <dbReference type="ChEBI" id="CHEBI:57966"/>
    </ligand>
</feature>
<feature type="binding site" evidence="1">
    <location>
        <begin position="147"/>
        <end position="150"/>
    </location>
    <ligand>
        <name>ATP</name>
        <dbReference type="ChEBI" id="CHEBI:30616"/>
    </ligand>
</feature>
<feature type="binding site" evidence="1">
    <location>
        <position position="153"/>
    </location>
    <ligand>
        <name>(R)-pantoate</name>
        <dbReference type="ChEBI" id="CHEBI:15980"/>
    </ligand>
</feature>
<feature type="binding site" evidence="1">
    <location>
        <position position="176"/>
    </location>
    <ligand>
        <name>ATP</name>
        <dbReference type="ChEBI" id="CHEBI:30616"/>
    </ligand>
</feature>
<feature type="binding site" evidence="1">
    <location>
        <begin position="184"/>
        <end position="187"/>
    </location>
    <ligand>
        <name>ATP</name>
        <dbReference type="ChEBI" id="CHEBI:30616"/>
    </ligand>
</feature>
<comment type="function">
    <text evidence="1">Catalyzes the condensation of pantoate with beta-alanine in an ATP-dependent reaction via a pantoyl-adenylate intermediate.</text>
</comment>
<comment type="catalytic activity">
    <reaction evidence="1">
        <text>(R)-pantoate + beta-alanine + ATP = (R)-pantothenate + AMP + diphosphate + H(+)</text>
        <dbReference type="Rhea" id="RHEA:10912"/>
        <dbReference type="ChEBI" id="CHEBI:15378"/>
        <dbReference type="ChEBI" id="CHEBI:15980"/>
        <dbReference type="ChEBI" id="CHEBI:29032"/>
        <dbReference type="ChEBI" id="CHEBI:30616"/>
        <dbReference type="ChEBI" id="CHEBI:33019"/>
        <dbReference type="ChEBI" id="CHEBI:57966"/>
        <dbReference type="ChEBI" id="CHEBI:456215"/>
        <dbReference type="EC" id="6.3.2.1"/>
    </reaction>
</comment>
<comment type="pathway">
    <text evidence="1">Cofactor biosynthesis; (R)-pantothenate biosynthesis; (R)-pantothenate from (R)-pantoate and beta-alanine: step 1/1.</text>
</comment>
<comment type="subunit">
    <text evidence="1">Homodimer.</text>
</comment>
<comment type="subcellular location">
    <subcellularLocation>
        <location evidence="1">Cytoplasm</location>
    </subcellularLocation>
</comment>
<comment type="miscellaneous">
    <text evidence="1">The reaction proceeds by a bi uni uni bi ping pong mechanism.</text>
</comment>
<comment type="similarity">
    <text evidence="1">Belongs to the pantothenate synthetase family.</text>
</comment>
<gene>
    <name evidence="1" type="primary">panC</name>
    <name type="ordered locus">BPUM_1973</name>
</gene>
<keyword id="KW-0067">ATP-binding</keyword>
<keyword id="KW-0963">Cytoplasm</keyword>
<keyword id="KW-0436">Ligase</keyword>
<keyword id="KW-0547">Nucleotide-binding</keyword>
<keyword id="KW-0566">Pantothenate biosynthesis</keyword>
<protein>
    <recommendedName>
        <fullName evidence="1">Pantothenate synthetase</fullName>
        <shortName evidence="1">PS</shortName>
        <ecNumber evidence="1">6.3.2.1</ecNumber>
    </recommendedName>
    <alternativeName>
        <fullName evidence="1">Pantoate--beta-alanine ligase</fullName>
    </alternativeName>
    <alternativeName>
        <fullName evidence="1">Pantoate-activating enzyme</fullName>
    </alternativeName>
</protein>
<name>PANC_BACP2</name>
<proteinExistence type="inferred from homology"/>
<evidence type="ECO:0000255" key="1">
    <source>
        <dbReference type="HAMAP-Rule" id="MF_00158"/>
    </source>
</evidence>
<reference key="1">
    <citation type="journal article" date="2007" name="PLoS ONE">
        <title>Paradoxical DNA repair and peroxide resistance gene conservation in Bacillus pumilus SAFR-032.</title>
        <authorList>
            <person name="Gioia J."/>
            <person name="Yerrapragada S."/>
            <person name="Qin X."/>
            <person name="Jiang H."/>
            <person name="Igboeli O.C."/>
            <person name="Muzny D."/>
            <person name="Dugan-Rocha S."/>
            <person name="Ding Y."/>
            <person name="Hawes A."/>
            <person name="Liu W."/>
            <person name="Perez L."/>
            <person name="Kovar C."/>
            <person name="Dinh H."/>
            <person name="Lee S."/>
            <person name="Nazareth L."/>
            <person name="Blyth P."/>
            <person name="Holder M."/>
            <person name="Buhay C."/>
            <person name="Tirumalai M.R."/>
            <person name="Liu Y."/>
            <person name="Dasgupta I."/>
            <person name="Bokhetache L."/>
            <person name="Fujita M."/>
            <person name="Karouia F."/>
            <person name="Eswara Moorthy P."/>
            <person name="Siefert J."/>
            <person name="Uzman A."/>
            <person name="Buzumbo P."/>
            <person name="Verma A."/>
            <person name="Zwiya H."/>
            <person name="McWilliams B.D."/>
            <person name="Olowu A."/>
            <person name="Clinkenbeard K.D."/>
            <person name="Newcombe D."/>
            <person name="Golebiewski L."/>
            <person name="Petrosino J.F."/>
            <person name="Nicholson W.L."/>
            <person name="Fox G.E."/>
            <person name="Venkateswaran K."/>
            <person name="Highlander S.K."/>
            <person name="Weinstock G.M."/>
        </authorList>
    </citation>
    <scope>NUCLEOTIDE SEQUENCE [LARGE SCALE GENOMIC DNA]</scope>
    <source>
        <strain>SAFR-032</strain>
    </source>
</reference>
<dbReference type="EC" id="6.3.2.1" evidence="1"/>
<dbReference type="EMBL" id="CP000813">
    <property type="protein sequence ID" value="ABV62643.1"/>
    <property type="molecule type" value="Genomic_DNA"/>
</dbReference>
<dbReference type="RefSeq" id="WP_012010357.1">
    <property type="nucleotide sequence ID" value="NZ_VEIA01000019.1"/>
</dbReference>
<dbReference type="SMR" id="A8FEH6"/>
<dbReference type="STRING" id="315750.BPUM_1973"/>
<dbReference type="GeneID" id="5621238"/>
<dbReference type="KEGG" id="bpu:BPUM_1973"/>
<dbReference type="eggNOG" id="COG0414">
    <property type="taxonomic scope" value="Bacteria"/>
</dbReference>
<dbReference type="HOGENOM" id="CLU_047148_0_0_9"/>
<dbReference type="OrthoDB" id="9773087at2"/>
<dbReference type="UniPathway" id="UPA00028">
    <property type="reaction ID" value="UER00005"/>
</dbReference>
<dbReference type="Proteomes" id="UP000001355">
    <property type="component" value="Chromosome"/>
</dbReference>
<dbReference type="GO" id="GO:0005829">
    <property type="term" value="C:cytosol"/>
    <property type="evidence" value="ECO:0007669"/>
    <property type="project" value="TreeGrafter"/>
</dbReference>
<dbReference type="GO" id="GO:0005524">
    <property type="term" value="F:ATP binding"/>
    <property type="evidence" value="ECO:0007669"/>
    <property type="project" value="UniProtKB-KW"/>
</dbReference>
<dbReference type="GO" id="GO:0004592">
    <property type="term" value="F:pantoate-beta-alanine ligase activity"/>
    <property type="evidence" value="ECO:0007669"/>
    <property type="project" value="UniProtKB-UniRule"/>
</dbReference>
<dbReference type="GO" id="GO:0015940">
    <property type="term" value="P:pantothenate biosynthetic process"/>
    <property type="evidence" value="ECO:0007669"/>
    <property type="project" value="UniProtKB-UniRule"/>
</dbReference>
<dbReference type="CDD" id="cd00560">
    <property type="entry name" value="PanC"/>
    <property type="match status" value="1"/>
</dbReference>
<dbReference type="FunFam" id="3.30.1300.10:FF:000001">
    <property type="entry name" value="Pantothenate synthetase"/>
    <property type="match status" value="1"/>
</dbReference>
<dbReference type="FunFam" id="3.40.50.620:FF:000013">
    <property type="entry name" value="Pantothenate synthetase"/>
    <property type="match status" value="1"/>
</dbReference>
<dbReference type="Gene3D" id="3.40.50.620">
    <property type="entry name" value="HUPs"/>
    <property type="match status" value="1"/>
</dbReference>
<dbReference type="Gene3D" id="3.30.1300.10">
    <property type="entry name" value="Pantoate-beta-alanine ligase, C-terminal domain"/>
    <property type="match status" value="1"/>
</dbReference>
<dbReference type="HAMAP" id="MF_00158">
    <property type="entry name" value="PanC"/>
    <property type="match status" value="1"/>
</dbReference>
<dbReference type="InterPro" id="IPR004821">
    <property type="entry name" value="Cyt_trans-like"/>
</dbReference>
<dbReference type="InterPro" id="IPR003721">
    <property type="entry name" value="Pantoate_ligase"/>
</dbReference>
<dbReference type="InterPro" id="IPR042176">
    <property type="entry name" value="Pantoate_ligase_C"/>
</dbReference>
<dbReference type="InterPro" id="IPR014729">
    <property type="entry name" value="Rossmann-like_a/b/a_fold"/>
</dbReference>
<dbReference type="NCBIfam" id="TIGR00125">
    <property type="entry name" value="cyt_tran_rel"/>
    <property type="match status" value="1"/>
</dbReference>
<dbReference type="NCBIfam" id="TIGR00018">
    <property type="entry name" value="panC"/>
    <property type="match status" value="1"/>
</dbReference>
<dbReference type="PANTHER" id="PTHR21299">
    <property type="entry name" value="CYTIDYLATE KINASE/PANTOATE-BETA-ALANINE LIGASE"/>
    <property type="match status" value="1"/>
</dbReference>
<dbReference type="PANTHER" id="PTHR21299:SF1">
    <property type="entry name" value="PANTOATE--BETA-ALANINE LIGASE"/>
    <property type="match status" value="1"/>
</dbReference>
<dbReference type="Pfam" id="PF02569">
    <property type="entry name" value="Pantoate_ligase"/>
    <property type="match status" value="1"/>
</dbReference>
<dbReference type="SUPFAM" id="SSF52374">
    <property type="entry name" value="Nucleotidylyl transferase"/>
    <property type="match status" value="1"/>
</dbReference>
<accession>A8FEH6</accession>